<name>COBS_CLONN</name>
<accession>A0Q0K0</accession>
<protein>
    <recommendedName>
        <fullName evidence="1">Adenosylcobinamide-GDP ribazoletransferase</fullName>
        <ecNumber evidence="1">2.7.8.26</ecNumber>
    </recommendedName>
    <alternativeName>
        <fullName evidence="1">Cobalamin synthase</fullName>
    </alternativeName>
    <alternativeName>
        <fullName evidence="1">Cobalamin-5'-phosphate synthase</fullName>
    </alternativeName>
</protein>
<sequence>MKNLILMIQFFTRIPINIEIDVKEDSFAKGISYLPLVGLIIGGFNAIVYFVSSKFILGTLPIVLALLANTIITGAFHIDGLADTCDGIFSSRKKERMLEIMKDSRVGTNGAIAIVFDFMLRYAVLNSLNKKYIIIALILSPVVAKTVVTLLMCFSVYARKEGGLGGVFVGKVKPFRVIVAFIISISIGYVLIGYKYVALLLITVLFIEIYKKLIYSKIDGMTGDTLGAANEIAEIIFMLALLSFKGCGLL</sequence>
<gene>
    <name evidence="1" type="primary">cobS</name>
    <name type="ordered locus">NT01CX_2079</name>
</gene>
<organism>
    <name type="scientific">Clostridium novyi (strain NT)</name>
    <dbReference type="NCBI Taxonomy" id="386415"/>
    <lineage>
        <taxon>Bacteria</taxon>
        <taxon>Bacillati</taxon>
        <taxon>Bacillota</taxon>
        <taxon>Clostridia</taxon>
        <taxon>Eubacteriales</taxon>
        <taxon>Clostridiaceae</taxon>
        <taxon>Clostridium</taxon>
    </lineage>
</organism>
<keyword id="KW-1003">Cell membrane</keyword>
<keyword id="KW-0169">Cobalamin biosynthesis</keyword>
<keyword id="KW-0460">Magnesium</keyword>
<keyword id="KW-0472">Membrane</keyword>
<keyword id="KW-1185">Reference proteome</keyword>
<keyword id="KW-0808">Transferase</keyword>
<keyword id="KW-0812">Transmembrane</keyword>
<keyword id="KW-1133">Transmembrane helix</keyword>
<evidence type="ECO:0000255" key="1">
    <source>
        <dbReference type="HAMAP-Rule" id="MF_00719"/>
    </source>
</evidence>
<feature type="chain" id="PRO_1000072778" description="Adenosylcobinamide-GDP ribazoletransferase">
    <location>
        <begin position="1"/>
        <end position="250"/>
    </location>
</feature>
<feature type="transmembrane region" description="Helical" evidence="1">
    <location>
        <begin position="31"/>
        <end position="51"/>
    </location>
</feature>
<feature type="transmembrane region" description="Helical" evidence="1">
    <location>
        <begin position="55"/>
        <end position="75"/>
    </location>
</feature>
<feature type="transmembrane region" description="Helical" evidence="1">
    <location>
        <begin position="106"/>
        <end position="126"/>
    </location>
</feature>
<feature type="transmembrane region" description="Helical" evidence="1">
    <location>
        <begin position="133"/>
        <end position="153"/>
    </location>
</feature>
<feature type="transmembrane region" description="Helical" evidence="1">
    <location>
        <begin position="187"/>
        <end position="207"/>
    </location>
</feature>
<feature type="transmembrane region" description="Helical" evidence="1">
    <location>
        <begin position="230"/>
        <end position="250"/>
    </location>
</feature>
<reference key="1">
    <citation type="journal article" date="2006" name="Nat. Biotechnol.">
        <title>The genome and transcriptomes of the anti-tumor agent Clostridium novyi-NT.</title>
        <authorList>
            <person name="Bettegowda C."/>
            <person name="Huang X."/>
            <person name="Lin J."/>
            <person name="Cheong I."/>
            <person name="Kohli M."/>
            <person name="Szabo S.A."/>
            <person name="Zhang X."/>
            <person name="Diaz L.A. Jr."/>
            <person name="Velculescu V.E."/>
            <person name="Parmigiani G."/>
            <person name="Kinzler K.W."/>
            <person name="Vogelstein B."/>
            <person name="Zhou S."/>
        </authorList>
    </citation>
    <scope>NUCLEOTIDE SEQUENCE [LARGE SCALE GENOMIC DNA]</scope>
    <source>
        <strain>NT</strain>
    </source>
</reference>
<comment type="function">
    <text evidence="1">Joins adenosylcobinamide-GDP and alpha-ribazole to generate adenosylcobalamin (Ado-cobalamin). Also synthesizes adenosylcobalamin 5'-phosphate from adenosylcobinamide-GDP and alpha-ribazole 5'-phosphate.</text>
</comment>
<comment type="catalytic activity">
    <reaction evidence="1">
        <text>alpha-ribazole + adenosylcob(III)inamide-GDP = adenosylcob(III)alamin + GMP + H(+)</text>
        <dbReference type="Rhea" id="RHEA:16049"/>
        <dbReference type="ChEBI" id="CHEBI:10329"/>
        <dbReference type="ChEBI" id="CHEBI:15378"/>
        <dbReference type="ChEBI" id="CHEBI:18408"/>
        <dbReference type="ChEBI" id="CHEBI:58115"/>
        <dbReference type="ChEBI" id="CHEBI:60487"/>
        <dbReference type="EC" id="2.7.8.26"/>
    </reaction>
</comment>
<comment type="catalytic activity">
    <reaction evidence="1">
        <text>alpha-ribazole 5'-phosphate + adenosylcob(III)inamide-GDP = adenosylcob(III)alamin 5'-phosphate + GMP + H(+)</text>
        <dbReference type="Rhea" id="RHEA:23560"/>
        <dbReference type="ChEBI" id="CHEBI:15378"/>
        <dbReference type="ChEBI" id="CHEBI:57918"/>
        <dbReference type="ChEBI" id="CHEBI:58115"/>
        <dbReference type="ChEBI" id="CHEBI:60487"/>
        <dbReference type="ChEBI" id="CHEBI:60493"/>
        <dbReference type="EC" id="2.7.8.26"/>
    </reaction>
</comment>
<comment type="cofactor">
    <cofactor evidence="1">
        <name>Mg(2+)</name>
        <dbReference type="ChEBI" id="CHEBI:18420"/>
    </cofactor>
</comment>
<comment type="pathway">
    <text evidence="1">Cofactor biosynthesis; adenosylcobalamin biosynthesis; adenosylcobalamin from cob(II)yrinate a,c-diamide: step 7/7.</text>
</comment>
<comment type="subcellular location">
    <subcellularLocation>
        <location evidence="1">Cell membrane</location>
        <topology evidence="1">Multi-pass membrane protein</topology>
    </subcellularLocation>
</comment>
<comment type="similarity">
    <text evidence="1">Belongs to the CobS family.</text>
</comment>
<proteinExistence type="inferred from homology"/>
<dbReference type="EC" id="2.7.8.26" evidence="1"/>
<dbReference type="EMBL" id="CP000382">
    <property type="protein sequence ID" value="ABK60743.1"/>
    <property type="molecule type" value="Genomic_DNA"/>
</dbReference>
<dbReference type="RefSeq" id="WP_011722152.1">
    <property type="nucleotide sequence ID" value="NC_008593.1"/>
</dbReference>
<dbReference type="STRING" id="386415.NT01CX_2079"/>
<dbReference type="KEGG" id="cno:NT01CX_2079"/>
<dbReference type="PATRIC" id="fig|386415.7.peg.1184"/>
<dbReference type="eggNOG" id="COG0368">
    <property type="taxonomic scope" value="Bacteria"/>
</dbReference>
<dbReference type="HOGENOM" id="CLU_057426_1_2_9"/>
<dbReference type="UniPathway" id="UPA00148">
    <property type="reaction ID" value="UER00238"/>
</dbReference>
<dbReference type="Proteomes" id="UP000008220">
    <property type="component" value="Chromosome"/>
</dbReference>
<dbReference type="GO" id="GO:0005886">
    <property type="term" value="C:plasma membrane"/>
    <property type="evidence" value="ECO:0007669"/>
    <property type="project" value="UniProtKB-SubCell"/>
</dbReference>
<dbReference type="GO" id="GO:0051073">
    <property type="term" value="F:adenosylcobinamide-GDP ribazoletransferase activity"/>
    <property type="evidence" value="ECO:0007669"/>
    <property type="project" value="UniProtKB-UniRule"/>
</dbReference>
<dbReference type="GO" id="GO:0008818">
    <property type="term" value="F:cobalamin 5'-phosphate synthase activity"/>
    <property type="evidence" value="ECO:0007669"/>
    <property type="project" value="UniProtKB-UniRule"/>
</dbReference>
<dbReference type="GO" id="GO:0009236">
    <property type="term" value="P:cobalamin biosynthetic process"/>
    <property type="evidence" value="ECO:0007669"/>
    <property type="project" value="UniProtKB-UniRule"/>
</dbReference>
<dbReference type="HAMAP" id="MF_00719">
    <property type="entry name" value="CobS"/>
    <property type="match status" value="1"/>
</dbReference>
<dbReference type="InterPro" id="IPR003805">
    <property type="entry name" value="CobS"/>
</dbReference>
<dbReference type="NCBIfam" id="TIGR00317">
    <property type="entry name" value="cobS"/>
    <property type="match status" value="1"/>
</dbReference>
<dbReference type="PANTHER" id="PTHR34148">
    <property type="entry name" value="ADENOSYLCOBINAMIDE-GDP RIBAZOLETRANSFERASE"/>
    <property type="match status" value="1"/>
</dbReference>
<dbReference type="PANTHER" id="PTHR34148:SF1">
    <property type="entry name" value="ADENOSYLCOBINAMIDE-GDP RIBAZOLETRANSFERASE"/>
    <property type="match status" value="1"/>
</dbReference>
<dbReference type="Pfam" id="PF02654">
    <property type="entry name" value="CobS"/>
    <property type="match status" value="1"/>
</dbReference>